<proteinExistence type="evidence at protein level"/>
<reference key="1">
    <citation type="journal article" date="1998" name="Nature">
        <title>Analysis of 1.9 Mb of contiguous sequence from chromosome 4 of Arabidopsis thaliana.</title>
        <authorList>
            <person name="Bevan M."/>
            <person name="Bancroft I."/>
            <person name="Bent E."/>
            <person name="Love K."/>
            <person name="Goodman H.M."/>
            <person name="Dean C."/>
            <person name="Bergkamp R."/>
            <person name="Dirkse W."/>
            <person name="van Staveren M."/>
            <person name="Stiekema W."/>
            <person name="Drost L."/>
            <person name="Ridley P."/>
            <person name="Hudson S.-A."/>
            <person name="Patel K."/>
            <person name="Murphy G."/>
            <person name="Piffanelli P."/>
            <person name="Wedler H."/>
            <person name="Wedler E."/>
            <person name="Wambutt R."/>
            <person name="Weitzenegger T."/>
            <person name="Pohl T."/>
            <person name="Terryn N."/>
            <person name="Gielen J."/>
            <person name="Villarroel R."/>
            <person name="De Clercq R."/>
            <person name="van Montagu M."/>
            <person name="Lecharny A."/>
            <person name="Aubourg S."/>
            <person name="Gy I."/>
            <person name="Kreis M."/>
            <person name="Lao N."/>
            <person name="Kavanagh T."/>
            <person name="Hempel S."/>
            <person name="Kotter P."/>
            <person name="Entian K.-D."/>
            <person name="Rieger M."/>
            <person name="Schaefer M."/>
            <person name="Funk B."/>
            <person name="Mueller-Auer S."/>
            <person name="Silvey M."/>
            <person name="James R."/>
            <person name="Monfort A."/>
            <person name="Pons A."/>
            <person name="Puigdomenech P."/>
            <person name="Douka A."/>
            <person name="Voukelatou E."/>
            <person name="Milioni D."/>
            <person name="Hatzopoulos P."/>
            <person name="Piravandi E."/>
            <person name="Obermaier B."/>
            <person name="Hilbert H."/>
            <person name="Duesterhoeft A."/>
            <person name="Moores T."/>
            <person name="Jones J.D.G."/>
            <person name="Eneva T."/>
            <person name="Palme K."/>
            <person name="Benes V."/>
            <person name="Rechmann S."/>
            <person name="Ansorge W."/>
            <person name="Cooke R."/>
            <person name="Berger C."/>
            <person name="Delseny M."/>
            <person name="Voet M."/>
            <person name="Volckaert G."/>
            <person name="Mewes H.-W."/>
            <person name="Klosterman S."/>
            <person name="Schueller C."/>
            <person name="Chalwatzis N."/>
        </authorList>
    </citation>
    <scope>NUCLEOTIDE SEQUENCE [LARGE SCALE GENOMIC DNA]</scope>
    <source>
        <strain>cv. Columbia</strain>
    </source>
</reference>
<reference key="2">
    <citation type="journal article" date="1999" name="Nature">
        <title>Sequence and analysis of chromosome 4 of the plant Arabidopsis thaliana.</title>
        <authorList>
            <person name="Mayer K.F.X."/>
            <person name="Schueller C."/>
            <person name="Wambutt R."/>
            <person name="Murphy G."/>
            <person name="Volckaert G."/>
            <person name="Pohl T."/>
            <person name="Duesterhoeft A."/>
            <person name="Stiekema W."/>
            <person name="Entian K.-D."/>
            <person name="Terryn N."/>
            <person name="Harris B."/>
            <person name="Ansorge W."/>
            <person name="Brandt P."/>
            <person name="Grivell L.A."/>
            <person name="Rieger M."/>
            <person name="Weichselgartner M."/>
            <person name="de Simone V."/>
            <person name="Obermaier B."/>
            <person name="Mache R."/>
            <person name="Mueller M."/>
            <person name="Kreis M."/>
            <person name="Delseny M."/>
            <person name="Puigdomenech P."/>
            <person name="Watson M."/>
            <person name="Schmidtheini T."/>
            <person name="Reichert B."/>
            <person name="Portetelle D."/>
            <person name="Perez-Alonso M."/>
            <person name="Boutry M."/>
            <person name="Bancroft I."/>
            <person name="Vos P."/>
            <person name="Hoheisel J."/>
            <person name="Zimmermann W."/>
            <person name="Wedler H."/>
            <person name="Ridley P."/>
            <person name="Langham S.-A."/>
            <person name="McCullagh B."/>
            <person name="Bilham L."/>
            <person name="Robben J."/>
            <person name="van der Schueren J."/>
            <person name="Grymonprez B."/>
            <person name="Chuang Y.-J."/>
            <person name="Vandenbussche F."/>
            <person name="Braeken M."/>
            <person name="Weltjens I."/>
            <person name="Voet M."/>
            <person name="Bastiaens I."/>
            <person name="Aert R."/>
            <person name="Defoor E."/>
            <person name="Weitzenegger T."/>
            <person name="Bothe G."/>
            <person name="Ramsperger U."/>
            <person name="Hilbert H."/>
            <person name="Braun M."/>
            <person name="Holzer E."/>
            <person name="Brandt A."/>
            <person name="Peters S."/>
            <person name="van Staveren M."/>
            <person name="Dirkse W."/>
            <person name="Mooijman P."/>
            <person name="Klein Lankhorst R."/>
            <person name="Rose M."/>
            <person name="Hauf J."/>
            <person name="Koetter P."/>
            <person name="Berneiser S."/>
            <person name="Hempel S."/>
            <person name="Feldpausch M."/>
            <person name="Lamberth S."/>
            <person name="Van den Daele H."/>
            <person name="De Keyser A."/>
            <person name="Buysshaert C."/>
            <person name="Gielen J."/>
            <person name="Villarroel R."/>
            <person name="De Clercq R."/>
            <person name="van Montagu M."/>
            <person name="Rogers J."/>
            <person name="Cronin A."/>
            <person name="Quail M.A."/>
            <person name="Bray-Allen S."/>
            <person name="Clark L."/>
            <person name="Doggett J."/>
            <person name="Hall S."/>
            <person name="Kay M."/>
            <person name="Lennard N."/>
            <person name="McLay K."/>
            <person name="Mayes R."/>
            <person name="Pettett A."/>
            <person name="Rajandream M.A."/>
            <person name="Lyne M."/>
            <person name="Benes V."/>
            <person name="Rechmann S."/>
            <person name="Borkova D."/>
            <person name="Bloecker H."/>
            <person name="Scharfe M."/>
            <person name="Grimm M."/>
            <person name="Loehnert T.-H."/>
            <person name="Dose S."/>
            <person name="de Haan M."/>
            <person name="Maarse A.C."/>
            <person name="Schaefer M."/>
            <person name="Mueller-Auer S."/>
            <person name="Gabel C."/>
            <person name="Fuchs M."/>
            <person name="Fartmann B."/>
            <person name="Granderath K."/>
            <person name="Dauner D."/>
            <person name="Herzl A."/>
            <person name="Neumann S."/>
            <person name="Argiriou A."/>
            <person name="Vitale D."/>
            <person name="Liguori R."/>
            <person name="Piravandi E."/>
            <person name="Massenet O."/>
            <person name="Quigley F."/>
            <person name="Clabauld G."/>
            <person name="Muendlein A."/>
            <person name="Felber R."/>
            <person name="Schnabl S."/>
            <person name="Hiller R."/>
            <person name="Schmidt W."/>
            <person name="Lecharny A."/>
            <person name="Aubourg S."/>
            <person name="Chefdor F."/>
            <person name="Cooke R."/>
            <person name="Berger C."/>
            <person name="Monfort A."/>
            <person name="Casacuberta E."/>
            <person name="Gibbons T."/>
            <person name="Weber N."/>
            <person name="Vandenbol M."/>
            <person name="Bargues M."/>
            <person name="Terol J."/>
            <person name="Torres A."/>
            <person name="Perez-Perez A."/>
            <person name="Purnelle B."/>
            <person name="Bent E."/>
            <person name="Johnson S."/>
            <person name="Tacon D."/>
            <person name="Jesse T."/>
            <person name="Heijnen L."/>
            <person name="Schwarz S."/>
            <person name="Scholler P."/>
            <person name="Heber S."/>
            <person name="Francs P."/>
            <person name="Bielke C."/>
            <person name="Frishman D."/>
            <person name="Haase D."/>
            <person name="Lemcke K."/>
            <person name="Mewes H.-W."/>
            <person name="Stocker S."/>
            <person name="Zaccaria P."/>
            <person name="Bevan M."/>
            <person name="Wilson R.K."/>
            <person name="de la Bastide M."/>
            <person name="Habermann K."/>
            <person name="Parnell L."/>
            <person name="Dedhia N."/>
            <person name="Gnoj L."/>
            <person name="Schutz K."/>
            <person name="Huang E."/>
            <person name="Spiegel L."/>
            <person name="Sekhon M."/>
            <person name="Murray J."/>
            <person name="Sheet P."/>
            <person name="Cordes M."/>
            <person name="Abu-Threideh J."/>
            <person name="Stoneking T."/>
            <person name="Kalicki J."/>
            <person name="Graves T."/>
            <person name="Harmon G."/>
            <person name="Edwards J."/>
            <person name="Latreille P."/>
            <person name="Courtney L."/>
            <person name="Cloud J."/>
            <person name="Abbott A."/>
            <person name="Scott K."/>
            <person name="Johnson D."/>
            <person name="Minx P."/>
            <person name="Bentley D."/>
            <person name="Fulton B."/>
            <person name="Miller N."/>
            <person name="Greco T."/>
            <person name="Kemp K."/>
            <person name="Kramer J."/>
            <person name="Fulton L."/>
            <person name="Mardis E."/>
            <person name="Dante M."/>
            <person name="Pepin K."/>
            <person name="Hillier L.W."/>
            <person name="Nelson J."/>
            <person name="Spieth J."/>
            <person name="Ryan E."/>
            <person name="Andrews S."/>
            <person name="Geisel C."/>
            <person name="Layman D."/>
            <person name="Du H."/>
            <person name="Ali J."/>
            <person name="Berghoff A."/>
            <person name="Jones K."/>
            <person name="Drone K."/>
            <person name="Cotton M."/>
            <person name="Joshu C."/>
            <person name="Antonoiu B."/>
            <person name="Zidanic M."/>
            <person name="Strong C."/>
            <person name="Sun H."/>
            <person name="Lamar B."/>
            <person name="Yordan C."/>
            <person name="Ma P."/>
            <person name="Zhong J."/>
            <person name="Preston R."/>
            <person name="Vil D."/>
            <person name="Shekher M."/>
            <person name="Matero A."/>
            <person name="Shah R."/>
            <person name="Swaby I.K."/>
            <person name="O'Shaughnessy A."/>
            <person name="Rodriguez M."/>
            <person name="Hoffman J."/>
            <person name="Till S."/>
            <person name="Granat S."/>
            <person name="Shohdy N."/>
            <person name="Hasegawa A."/>
            <person name="Hameed A."/>
            <person name="Lodhi M."/>
            <person name="Johnson A."/>
            <person name="Chen E."/>
            <person name="Marra M.A."/>
            <person name="Martienssen R."/>
            <person name="McCombie W.R."/>
        </authorList>
    </citation>
    <scope>NUCLEOTIDE SEQUENCE [LARGE SCALE GENOMIC DNA]</scope>
    <source>
        <strain>cv. Columbia</strain>
    </source>
</reference>
<reference key="3">
    <citation type="journal article" date="2017" name="Plant J.">
        <title>Araport11: a complete reannotation of the Arabidopsis thaliana reference genome.</title>
        <authorList>
            <person name="Cheng C.Y."/>
            <person name="Krishnakumar V."/>
            <person name="Chan A.P."/>
            <person name="Thibaud-Nissen F."/>
            <person name="Schobel S."/>
            <person name="Town C.D."/>
        </authorList>
    </citation>
    <scope>GENOME REANNOTATION</scope>
    <source>
        <strain>cv. Columbia</strain>
    </source>
</reference>
<reference key="4">
    <citation type="journal article" date="2003" name="Science">
        <title>Empirical analysis of transcriptional activity in the Arabidopsis genome.</title>
        <authorList>
            <person name="Yamada K."/>
            <person name="Lim J."/>
            <person name="Dale J.M."/>
            <person name="Chen H."/>
            <person name="Shinn P."/>
            <person name="Palm C.J."/>
            <person name="Southwick A.M."/>
            <person name="Wu H.C."/>
            <person name="Kim C.J."/>
            <person name="Nguyen M."/>
            <person name="Pham P.K."/>
            <person name="Cheuk R.F."/>
            <person name="Karlin-Newmann G."/>
            <person name="Liu S.X."/>
            <person name="Lam B."/>
            <person name="Sakano H."/>
            <person name="Wu T."/>
            <person name="Yu G."/>
            <person name="Miranda M."/>
            <person name="Quach H.L."/>
            <person name="Tripp M."/>
            <person name="Chang C.H."/>
            <person name="Lee J.M."/>
            <person name="Toriumi M.J."/>
            <person name="Chan M.M."/>
            <person name="Tang C.C."/>
            <person name="Onodera C.S."/>
            <person name="Deng J.M."/>
            <person name="Akiyama K."/>
            <person name="Ansari Y."/>
            <person name="Arakawa T."/>
            <person name="Banh J."/>
            <person name="Banno F."/>
            <person name="Bowser L."/>
            <person name="Brooks S.Y."/>
            <person name="Carninci P."/>
            <person name="Chao Q."/>
            <person name="Choy N."/>
            <person name="Enju A."/>
            <person name="Goldsmith A.D."/>
            <person name="Gurjal M."/>
            <person name="Hansen N.F."/>
            <person name="Hayashizaki Y."/>
            <person name="Johnson-Hopson C."/>
            <person name="Hsuan V.W."/>
            <person name="Iida K."/>
            <person name="Karnes M."/>
            <person name="Khan S."/>
            <person name="Koesema E."/>
            <person name="Ishida J."/>
            <person name="Jiang P.X."/>
            <person name="Jones T."/>
            <person name="Kawai J."/>
            <person name="Kamiya A."/>
            <person name="Meyers C."/>
            <person name="Nakajima M."/>
            <person name="Narusaka M."/>
            <person name="Seki M."/>
            <person name="Sakurai T."/>
            <person name="Satou M."/>
            <person name="Tamse R."/>
            <person name="Vaysberg M."/>
            <person name="Wallender E.K."/>
            <person name="Wong C."/>
            <person name="Yamamura Y."/>
            <person name="Yuan S."/>
            <person name="Shinozaki K."/>
            <person name="Davis R.W."/>
            <person name="Theologis A."/>
            <person name="Ecker J.R."/>
        </authorList>
    </citation>
    <scope>NUCLEOTIDE SEQUENCE [LARGE SCALE MRNA]</scope>
    <source>
        <strain>cv. Columbia</strain>
    </source>
</reference>
<reference key="5">
    <citation type="book" date="2005" name="Proceedings of the 16th international conference on Arabidopsis research">
        <title>The plant UBX-domain containing (PUX) protein family regulates the function of Arabidopsis CDC48, a conserved essential AAA-ATPase.</title>
        <authorList>
            <person name="Posthuma R."/>
            <person name="Rancour D."/>
            <person name="Park S."/>
            <person name="Bates B."/>
            <person name="Bednarek S."/>
        </authorList>
    </citation>
    <scope>GENE FAMILY</scope>
</reference>
<reference key="6">
    <citation type="journal article" date="2007" name="J. Biol. Chem.">
        <title>Protein domain-domain interactions and requirements for the negative regulation of Arabidopsis CDC48/p97 by the plant ubiquitin regulatory X (UBX) domain-containing protein, PUX1.</title>
        <authorList>
            <person name="Park S."/>
            <person name="Rancour D.M."/>
            <person name="Bednarek S.Y."/>
        </authorList>
    </citation>
    <scope>INTERACTION WITH CDC48A</scope>
</reference>
<reference key="7">
    <citation type="journal article" date="2009" name="J. Proteomics">
        <title>Phosphoproteomic analysis of nuclei-enriched fractions from Arabidopsis thaliana.</title>
        <authorList>
            <person name="Jones A.M.E."/>
            <person name="MacLean D."/>
            <person name="Studholme D.J."/>
            <person name="Serna-Sanz A."/>
            <person name="Andreasson E."/>
            <person name="Rathjen J.P."/>
            <person name="Peck S.C."/>
        </authorList>
    </citation>
    <scope>IDENTIFICATION BY MASS SPECTROMETRY [LARGE SCALE ANALYSIS]</scope>
    <source>
        <strain>cv. Columbia</strain>
    </source>
</reference>
<reference key="8">
    <citation type="journal article" date="2009" name="Plant Physiol.">
        <title>Large-scale Arabidopsis phosphoproteome profiling reveals novel chloroplast kinase substrates and phosphorylation networks.</title>
        <authorList>
            <person name="Reiland S."/>
            <person name="Messerli G."/>
            <person name="Baerenfaller K."/>
            <person name="Gerrits B."/>
            <person name="Endler A."/>
            <person name="Grossmann J."/>
            <person name="Gruissem W."/>
            <person name="Baginsky S."/>
        </authorList>
    </citation>
    <scope>IDENTIFICATION BY MASS SPECTROMETRY [LARGE SCALE ANALYSIS]</scope>
</reference>
<protein>
    <recommendedName>
        <fullName evidence="5">Plant UBX domain-containing protein 5</fullName>
        <shortName evidence="5">PUX5</shortName>
    </recommendedName>
</protein>
<gene>
    <name evidence="5" type="primary">PUX5</name>
    <name evidence="7" type="ordered locus">At4g15410</name>
    <name evidence="8" type="ORF">dl3750w</name>
    <name evidence="9" type="ORF">FCAALL.290</name>
</gene>
<dbReference type="EMBL" id="Z97338">
    <property type="protein sequence ID" value="CAB10320.1"/>
    <property type="status" value="ALT_SEQ"/>
    <property type="molecule type" value="Genomic_DNA"/>
</dbReference>
<dbReference type="EMBL" id="AL161541">
    <property type="protein sequence ID" value="CAB78583.1"/>
    <property type="status" value="ALT_SEQ"/>
    <property type="molecule type" value="Genomic_DNA"/>
</dbReference>
<dbReference type="EMBL" id="CP002687">
    <property type="protein sequence ID" value="AEE83597.1"/>
    <property type="molecule type" value="Genomic_DNA"/>
</dbReference>
<dbReference type="EMBL" id="AY050766">
    <property type="protein sequence ID" value="AAK92701.1"/>
    <property type="molecule type" value="mRNA"/>
</dbReference>
<dbReference type="EMBL" id="BT008747">
    <property type="protein sequence ID" value="AAP46195.1"/>
    <property type="molecule type" value="mRNA"/>
</dbReference>
<dbReference type="PIR" id="F71418">
    <property type="entry name" value="F71418"/>
</dbReference>
<dbReference type="RefSeq" id="NP_567463.1">
    <property type="nucleotide sequence ID" value="NM_117629.4"/>
</dbReference>
<dbReference type="SMR" id="Q7Y175"/>
<dbReference type="BioGRID" id="12507">
    <property type="interactions" value="5"/>
</dbReference>
<dbReference type="FunCoup" id="Q7Y175">
    <property type="interactions" value="4102"/>
</dbReference>
<dbReference type="IntAct" id="Q7Y175">
    <property type="interactions" value="1"/>
</dbReference>
<dbReference type="STRING" id="3702.Q7Y175"/>
<dbReference type="TCDB" id="3.A.16.1.5">
    <property type="family name" value="the endoplasmic reticular retrotranslocon (er-rt) family"/>
</dbReference>
<dbReference type="iPTMnet" id="Q7Y175"/>
<dbReference type="PaxDb" id="3702-AT4G15410.1"/>
<dbReference type="ProteomicsDB" id="226021"/>
<dbReference type="EnsemblPlants" id="AT4G15410.1">
    <property type="protein sequence ID" value="AT4G15410.1"/>
    <property type="gene ID" value="AT4G15410"/>
</dbReference>
<dbReference type="GeneID" id="827210"/>
<dbReference type="Gramene" id="AT4G15410.1">
    <property type="protein sequence ID" value="AT4G15410.1"/>
    <property type="gene ID" value="AT4G15410"/>
</dbReference>
<dbReference type="KEGG" id="ath:AT4G15410"/>
<dbReference type="Araport" id="AT4G15410"/>
<dbReference type="TAIR" id="AT4G15410">
    <property type="gene designation" value="PUX5"/>
</dbReference>
<dbReference type="eggNOG" id="KOG2086">
    <property type="taxonomic scope" value="Eukaryota"/>
</dbReference>
<dbReference type="HOGENOM" id="CLU_029402_4_2_1"/>
<dbReference type="InParanoid" id="Q7Y175"/>
<dbReference type="OMA" id="REVLHCN"/>
<dbReference type="PhylomeDB" id="Q7Y175"/>
<dbReference type="CD-CODE" id="4299E36E">
    <property type="entry name" value="Nucleolus"/>
</dbReference>
<dbReference type="PRO" id="PR:Q7Y175"/>
<dbReference type="Proteomes" id="UP000006548">
    <property type="component" value="Chromosome 4"/>
</dbReference>
<dbReference type="ExpressionAtlas" id="Q7Y175">
    <property type="expression patterns" value="baseline and differential"/>
</dbReference>
<dbReference type="GO" id="GO:0005829">
    <property type="term" value="C:cytosol"/>
    <property type="evidence" value="ECO:0007005"/>
    <property type="project" value="TAIR"/>
</dbReference>
<dbReference type="GO" id="GO:0051117">
    <property type="term" value="F:ATPase binding"/>
    <property type="evidence" value="ECO:0000353"/>
    <property type="project" value="UniProtKB"/>
</dbReference>
<dbReference type="CDD" id="cd14349">
    <property type="entry name" value="UBA_CF106"/>
    <property type="match status" value="1"/>
</dbReference>
<dbReference type="CDD" id="cd01770">
    <property type="entry name" value="UBX_UBXN2"/>
    <property type="match status" value="1"/>
</dbReference>
<dbReference type="FunFam" id="1.10.8.10:FF:000020">
    <property type="entry name" value="NSFL1 (p97) cofactor (p47)"/>
    <property type="match status" value="1"/>
</dbReference>
<dbReference type="FunFam" id="3.10.20.90:FF:000179">
    <property type="entry name" value="Plant UBX domain-containing protein 4"/>
    <property type="match status" value="1"/>
</dbReference>
<dbReference type="FunFam" id="3.30.420.210:FF:000005">
    <property type="entry name" value="Plant UBX domain-containing protein 4"/>
    <property type="match status" value="1"/>
</dbReference>
<dbReference type="Gene3D" id="1.10.8.10">
    <property type="entry name" value="DNA helicase RuvA subunit, C-terminal domain"/>
    <property type="match status" value="1"/>
</dbReference>
<dbReference type="Gene3D" id="3.10.20.90">
    <property type="entry name" value="Phosphatidylinositol 3-kinase Catalytic Subunit, Chain A, domain 1"/>
    <property type="match status" value="1"/>
</dbReference>
<dbReference type="Gene3D" id="3.30.420.210">
    <property type="entry name" value="SEP domain"/>
    <property type="match status" value="1"/>
</dbReference>
<dbReference type="InterPro" id="IPR039517">
    <property type="entry name" value="C6orf106_UBA-like"/>
</dbReference>
<dbReference type="InterPro" id="IPR036241">
    <property type="entry name" value="NSFL1C_SEP_dom_sf"/>
</dbReference>
<dbReference type="InterPro" id="IPR012989">
    <property type="entry name" value="SEP_domain"/>
</dbReference>
<dbReference type="InterPro" id="IPR009060">
    <property type="entry name" value="UBA-like_sf"/>
</dbReference>
<dbReference type="InterPro" id="IPR029071">
    <property type="entry name" value="Ubiquitin-like_domsf"/>
</dbReference>
<dbReference type="InterPro" id="IPR001012">
    <property type="entry name" value="UBX_dom"/>
</dbReference>
<dbReference type="PANTHER" id="PTHR23333:SF43">
    <property type="entry name" value="PLANT UBX DOMAIN-CONTAINING PROTEIN 5-RELATED"/>
    <property type="match status" value="1"/>
</dbReference>
<dbReference type="PANTHER" id="PTHR23333">
    <property type="entry name" value="UBX DOMAIN CONTAINING PROTEIN"/>
    <property type="match status" value="1"/>
</dbReference>
<dbReference type="Pfam" id="PF08059">
    <property type="entry name" value="SEP"/>
    <property type="match status" value="1"/>
</dbReference>
<dbReference type="Pfam" id="PF14555">
    <property type="entry name" value="UBA_4"/>
    <property type="match status" value="1"/>
</dbReference>
<dbReference type="Pfam" id="PF00789">
    <property type="entry name" value="UBX"/>
    <property type="match status" value="1"/>
</dbReference>
<dbReference type="SMART" id="SM00553">
    <property type="entry name" value="SEP"/>
    <property type="match status" value="1"/>
</dbReference>
<dbReference type="SMART" id="SM00166">
    <property type="entry name" value="UBX"/>
    <property type="match status" value="1"/>
</dbReference>
<dbReference type="SUPFAM" id="SSF102848">
    <property type="entry name" value="NSFL1 (p97 ATPase) cofactor p47, SEP domain"/>
    <property type="match status" value="1"/>
</dbReference>
<dbReference type="SUPFAM" id="SSF46934">
    <property type="entry name" value="UBA-like"/>
    <property type="match status" value="1"/>
</dbReference>
<dbReference type="SUPFAM" id="SSF54236">
    <property type="entry name" value="Ubiquitin-like"/>
    <property type="match status" value="1"/>
</dbReference>
<dbReference type="PROSITE" id="PS51399">
    <property type="entry name" value="SEP"/>
    <property type="match status" value="1"/>
</dbReference>
<dbReference type="PROSITE" id="PS50033">
    <property type="entry name" value="UBX"/>
    <property type="match status" value="1"/>
</dbReference>
<name>PUX5_ARATH</name>
<sequence>MATETNENLINSFIEITSSSREEANFFLESHTWNLDAAVSTFLDNDAAAAAEPNPTGPPPPSSTIAGAQSPSQSHSPDYTPSETSPSPSRSRSASPSSRAAPYGLRSRGGAGENKETENPSGIRSSRSRQHAGNIRTFADLNRSPADGEGSDSDEANEYYTGGQKSGMMVQDPKKVKDVDELFDQARQSAVDRPVEPSRSASTSFTGAARLLSGEAVSSSPQQQQQEQPQRIMHTITFWLNGFTVNDGPLRGFSDPENAAFMNSISRSECPSELEPADKKIPVHVDLVRRGENFTEPPKPKNPFQGVGRTLGASGSGSSSAPQASSAPMNVAPAPSRGLVVDPAAPTTSIQLRLADGTRLVSRFNNHHTVRDVRGFIDASRPGGSKEYQLLTMGFPPKQLTELDQTIEQAGIANAVVIQKF</sequence>
<evidence type="ECO:0000255" key="1">
    <source>
        <dbReference type="PROSITE-ProRule" id="PRU00215"/>
    </source>
</evidence>
<evidence type="ECO:0000255" key="2">
    <source>
        <dbReference type="PROSITE-ProRule" id="PRU00732"/>
    </source>
</evidence>
<evidence type="ECO:0000256" key="3">
    <source>
        <dbReference type="SAM" id="MobiDB-lite"/>
    </source>
</evidence>
<evidence type="ECO:0000269" key="4">
    <source>
    </source>
</evidence>
<evidence type="ECO:0000303" key="5">
    <source ref="5"/>
</evidence>
<evidence type="ECO:0000305" key="6"/>
<evidence type="ECO:0000312" key="7">
    <source>
        <dbReference type="Araport" id="AT4G15410"/>
    </source>
</evidence>
<evidence type="ECO:0000312" key="8">
    <source>
        <dbReference type="EMBL" id="CAB10320.1"/>
    </source>
</evidence>
<evidence type="ECO:0000312" key="9">
    <source>
        <dbReference type="EMBL" id="CAB78583.1"/>
    </source>
</evidence>
<feature type="chain" id="PRO_0000211041" description="Plant UBX domain-containing protein 5">
    <location>
        <begin position="1"/>
        <end position="421"/>
    </location>
</feature>
<feature type="domain" description="UBA">
    <location>
        <begin position="4"/>
        <end position="45"/>
    </location>
</feature>
<feature type="domain" description="SEP" evidence="2">
    <location>
        <begin position="231"/>
        <end position="295"/>
    </location>
</feature>
<feature type="domain" description="UBX" evidence="1">
    <location>
        <begin position="343"/>
        <end position="420"/>
    </location>
</feature>
<feature type="region of interest" description="Disordered" evidence="3">
    <location>
        <begin position="46"/>
        <end position="171"/>
    </location>
</feature>
<feature type="region of interest" description="Disordered" evidence="3">
    <location>
        <begin position="292"/>
        <end position="338"/>
    </location>
</feature>
<feature type="compositionally biased region" description="Polar residues" evidence="3">
    <location>
        <begin position="69"/>
        <end position="84"/>
    </location>
</feature>
<feature type="compositionally biased region" description="Low complexity" evidence="3">
    <location>
        <begin position="85"/>
        <end position="102"/>
    </location>
</feature>
<feature type="compositionally biased region" description="Low complexity" evidence="3">
    <location>
        <begin position="312"/>
        <end position="328"/>
    </location>
</feature>
<feature type="sequence conflict" description="In Ref. 4; AAK92701." evidence="6" ref="4">
    <original>K</original>
    <variation>E</variation>
    <location>
        <position position="165"/>
    </location>
</feature>
<organism>
    <name type="scientific">Arabidopsis thaliana</name>
    <name type="common">Mouse-ear cress</name>
    <dbReference type="NCBI Taxonomy" id="3702"/>
    <lineage>
        <taxon>Eukaryota</taxon>
        <taxon>Viridiplantae</taxon>
        <taxon>Streptophyta</taxon>
        <taxon>Embryophyta</taxon>
        <taxon>Tracheophyta</taxon>
        <taxon>Spermatophyta</taxon>
        <taxon>Magnoliopsida</taxon>
        <taxon>eudicotyledons</taxon>
        <taxon>Gunneridae</taxon>
        <taxon>Pentapetalae</taxon>
        <taxon>rosids</taxon>
        <taxon>malvids</taxon>
        <taxon>Brassicales</taxon>
        <taxon>Brassicaceae</taxon>
        <taxon>Camelineae</taxon>
        <taxon>Arabidopsis</taxon>
    </lineage>
</organism>
<accession>Q7Y175</accession>
<accession>O23394</accession>
<accession>Q94A11</accession>
<keyword id="KW-1185">Reference proteome</keyword>
<keyword id="KW-0833">Ubl conjugation pathway</keyword>
<comment type="subunit">
    <text evidence="4">Interacts with CDC48A (non-hexameric) via its UBX domain.</text>
</comment>
<comment type="sequence caution" evidence="6">
    <conflict type="erroneous gene model prediction">
        <sequence resource="EMBL-CDS" id="CAB10320"/>
    </conflict>
    <text>The predicted gene At4g15410 has been split into 2 genes: At4g15410 and At4g15415.</text>
</comment>
<comment type="sequence caution" evidence="6">
    <conflict type="erroneous gene model prediction">
        <sequence resource="EMBL-CDS" id="CAB78583"/>
    </conflict>
    <text>The predicted gene At4g15410 has been split into 2 genes: At4g15410 and At4g15415.</text>
</comment>